<sequence length="253" mass="27160">MRKPIIAGNWKMFKTFEEAIQFVDAVQDKLPSNEKVDAVICAPALYLPTLVQVASESELAIGAQTMHYENEGAFTGEISPAQLASVDVDYVILGHSERREYYNETDEAINKKVAAALAHNIVPIICCGETLEEREAGTTEQKVAGQIKAALAGFEAQQVEHMVIAYEPIWAIGTGKTATADDANQVCGAIRSVVEELFDAATANAVRIQYGGSVKPDNVHELLSKEHIDGALVGGASLQPESYLTLLEAAANA</sequence>
<comment type="function">
    <text evidence="1">Involved in the gluconeogenesis. Catalyzes stereospecifically the conversion of dihydroxyacetone phosphate (DHAP) to D-glyceraldehyde-3-phosphate (G3P).</text>
</comment>
<comment type="catalytic activity">
    <reaction evidence="1">
        <text>D-glyceraldehyde 3-phosphate = dihydroxyacetone phosphate</text>
        <dbReference type="Rhea" id="RHEA:18585"/>
        <dbReference type="ChEBI" id="CHEBI:57642"/>
        <dbReference type="ChEBI" id="CHEBI:59776"/>
        <dbReference type="EC" id="5.3.1.1"/>
    </reaction>
</comment>
<comment type="pathway">
    <text evidence="1">Carbohydrate biosynthesis; gluconeogenesis.</text>
</comment>
<comment type="pathway">
    <text evidence="1">Carbohydrate degradation; glycolysis; D-glyceraldehyde 3-phosphate from glycerone phosphate: step 1/1.</text>
</comment>
<comment type="subunit">
    <text evidence="1">Homodimer.</text>
</comment>
<comment type="subcellular location">
    <subcellularLocation>
        <location evidence="1">Cytoplasm</location>
    </subcellularLocation>
</comment>
<comment type="similarity">
    <text evidence="1">Belongs to the triosephosphate isomerase family.</text>
</comment>
<protein>
    <recommendedName>
        <fullName evidence="1">Triosephosphate isomerase</fullName>
        <shortName evidence="1">TIM</shortName>
        <shortName evidence="1">TPI</shortName>
        <ecNumber evidence="1">5.3.1.1</ecNumber>
    </recommendedName>
    <alternativeName>
        <fullName evidence="1">Triose-phosphate isomerase</fullName>
    </alternativeName>
</protein>
<proteinExistence type="inferred from homology"/>
<feature type="chain" id="PRO_1000096510" description="Triosephosphate isomerase">
    <location>
        <begin position="1"/>
        <end position="253"/>
    </location>
</feature>
<feature type="active site" description="Electrophile" evidence="1">
    <location>
        <position position="95"/>
    </location>
</feature>
<feature type="active site" description="Proton acceptor" evidence="1">
    <location>
        <position position="167"/>
    </location>
</feature>
<feature type="binding site" evidence="1">
    <location>
        <begin position="9"/>
        <end position="11"/>
    </location>
    <ligand>
        <name>substrate</name>
    </ligand>
</feature>
<feature type="binding site" evidence="1">
    <location>
        <position position="173"/>
    </location>
    <ligand>
        <name>substrate</name>
    </ligand>
</feature>
<feature type="binding site" evidence="1">
    <location>
        <position position="213"/>
    </location>
    <ligand>
        <name>substrate</name>
    </ligand>
</feature>
<feature type="binding site" evidence="1">
    <location>
        <begin position="234"/>
        <end position="235"/>
    </location>
    <ligand>
        <name>substrate</name>
    </ligand>
</feature>
<feature type="modified residue" description="Phosphoserine" evidence="1">
    <location>
        <position position="213"/>
    </location>
</feature>
<name>TPIS_LYSSC</name>
<accession>B1HVS2</accession>
<keyword id="KW-0963">Cytoplasm</keyword>
<keyword id="KW-0312">Gluconeogenesis</keyword>
<keyword id="KW-0324">Glycolysis</keyword>
<keyword id="KW-0413">Isomerase</keyword>
<keyword id="KW-0597">Phosphoprotein</keyword>
<evidence type="ECO:0000255" key="1">
    <source>
        <dbReference type="HAMAP-Rule" id="MF_00147"/>
    </source>
</evidence>
<organism>
    <name type="scientific">Lysinibacillus sphaericus (strain C3-41)</name>
    <dbReference type="NCBI Taxonomy" id="444177"/>
    <lineage>
        <taxon>Bacteria</taxon>
        <taxon>Bacillati</taxon>
        <taxon>Bacillota</taxon>
        <taxon>Bacilli</taxon>
        <taxon>Bacillales</taxon>
        <taxon>Bacillaceae</taxon>
        <taxon>Lysinibacillus</taxon>
    </lineage>
</organism>
<reference key="1">
    <citation type="journal article" date="2008" name="J. Bacteriol.">
        <title>Complete genome sequence of the mosquitocidal bacterium Bacillus sphaericus C3-41 and comparison with those of closely related Bacillus species.</title>
        <authorList>
            <person name="Hu X."/>
            <person name="Fan W."/>
            <person name="Han B."/>
            <person name="Liu H."/>
            <person name="Zheng D."/>
            <person name="Li Q."/>
            <person name="Dong W."/>
            <person name="Yan J."/>
            <person name="Gao M."/>
            <person name="Berry C."/>
            <person name="Yuan Z."/>
        </authorList>
    </citation>
    <scope>NUCLEOTIDE SEQUENCE [LARGE SCALE GENOMIC DNA]</scope>
    <source>
        <strain>C3-41</strain>
    </source>
</reference>
<gene>
    <name evidence="1" type="primary">tpiA</name>
    <name type="ordered locus">Bsph_0466</name>
</gene>
<dbReference type="EC" id="5.3.1.1" evidence="1"/>
<dbReference type="EMBL" id="CP000817">
    <property type="protein sequence ID" value="ACA38091.1"/>
    <property type="molecule type" value="Genomic_DNA"/>
</dbReference>
<dbReference type="RefSeq" id="WP_012292246.1">
    <property type="nucleotide sequence ID" value="NC_010382.1"/>
</dbReference>
<dbReference type="SMR" id="B1HVS2"/>
<dbReference type="EnsemblBacteria" id="ACA38091">
    <property type="protein sequence ID" value="ACA38091"/>
    <property type="gene ID" value="Bsph_0466"/>
</dbReference>
<dbReference type="KEGG" id="lsp:Bsph_0466"/>
<dbReference type="HOGENOM" id="CLU_024251_2_3_9"/>
<dbReference type="UniPathway" id="UPA00109">
    <property type="reaction ID" value="UER00189"/>
</dbReference>
<dbReference type="UniPathway" id="UPA00138"/>
<dbReference type="Proteomes" id="UP000002164">
    <property type="component" value="Chromosome"/>
</dbReference>
<dbReference type="GO" id="GO:0005829">
    <property type="term" value="C:cytosol"/>
    <property type="evidence" value="ECO:0007669"/>
    <property type="project" value="TreeGrafter"/>
</dbReference>
<dbReference type="GO" id="GO:0004807">
    <property type="term" value="F:triose-phosphate isomerase activity"/>
    <property type="evidence" value="ECO:0007669"/>
    <property type="project" value="UniProtKB-UniRule"/>
</dbReference>
<dbReference type="GO" id="GO:0006094">
    <property type="term" value="P:gluconeogenesis"/>
    <property type="evidence" value="ECO:0007669"/>
    <property type="project" value="UniProtKB-UniRule"/>
</dbReference>
<dbReference type="GO" id="GO:0046166">
    <property type="term" value="P:glyceraldehyde-3-phosphate biosynthetic process"/>
    <property type="evidence" value="ECO:0007669"/>
    <property type="project" value="TreeGrafter"/>
</dbReference>
<dbReference type="GO" id="GO:0019563">
    <property type="term" value="P:glycerol catabolic process"/>
    <property type="evidence" value="ECO:0007669"/>
    <property type="project" value="TreeGrafter"/>
</dbReference>
<dbReference type="GO" id="GO:0006096">
    <property type="term" value="P:glycolytic process"/>
    <property type="evidence" value="ECO:0007669"/>
    <property type="project" value="UniProtKB-UniRule"/>
</dbReference>
<dbReference type="CDD" id="cd00311">
    <property type="entry name" value="TIM"/>
    <property type="match status" value="1"/>
</dbReference>
<dbReference type="FunFam" id="3.20.20.70:FF:000016">
    <property type="entry name" value="Triosephosphate isomerase"/>
    <property type="match status" value="1"/>
</dbReference>
<dbReference type="Gene3D" id="3.20.20.70">
    <property type="entry name" value="Aldolase class I"/>
    <property type="match status" value="1"/>
</dbReference>
<dbReference type="HAMAP" id="MF_00147_B">
    <property type="entry name" value="TIM_B"/>
    <property type="match status" value="1"/>
</dbReference>
<dbReference type="InterPro" id="IPR013785">
    <property type="entry name" value="Aldolase_TIM"/>
</dbReference>
<dbReference type="InterPro" id="IPR035990">
    <property type="entry name" value="TIM_sf"/>
</dbReference>
<dbReference type="InterPro" id="IPR022896">
    <property type="entry name" value="TrioseP_Isoase_bac/euk"/>
</dbReference>
<dbReference type="InterPro" id="IPR000652">
    <property type="entry name" value="Triosephosphate_isomerase"/>
</dbReference>
<dbReference type="InterPro" id="IPR020861">
    <property type="entry name" value="Triosephosphate_isomerase_AS"/>
</dbReference>
<dbReference type="NCBIfam" id="TIGR00419">
    <property type="entry name" value="tim"/>
    <property type="match status" value="1"/>
</dbReference>
<dbReference type="PANTHER" id="PTHR21139">
    <property type="entry name" value="TRIOSEPHOSPHATE ISOMERASE"/>
    <property type="match status" value="1"/>
</dbReference>
<dbReference type="PANTHER" id="PTHR21139:SF42">
    <property type="entry name" value="TRIOSEPHOSPHATE ISOMERASE"/>
    <property type="match status" value="1"/>
</dbReference>
<dbReference type="Pfam" id="PF00121">
    <property type="entry name" value="TIM"/>
    <property type="match status" value="1"/>
</dbReference>
<dbReference type="SUPFAM" id="SSF51351">
    <property type="entry name" value="Triosephosphate isomerase (TIM)"/>
    <property type="match status" value="1"/>
</dbReference>
<dbReference type="PROSITE" id="PS00171">
    <property type="entry name" value="TIM_1"/>
    <property type="match status" value="1"/>
</dbReference>
<dbReference type="PROSITE" id="PS51440">
    <property type="entry name" value="TIM_2"/>
    <property type="match status" value="1"/>
</dbReference>